<reference key="1">
    <citation type="journal article" date="2000" name="Nature">
        <title>Sequence and analysis of chromosome 1 of the plant Arabidopsis thaliana.</title>
        <authorList>
            <person name="Theologis A."/>
            <person name="Ecker J.R."/>
            <person name="Palm C.J."/>
            <person name="Federspiel N.A."/>
            <person name="Kaul S."/>
            <person name="White O."/>
            <person name="Alonso J."/>
            <person name="Altafi H."/>
            <person name="Araujo R."/>
            <person name="Bowman C.L."/>
            <person name="Brooks S.Y."/>
            <person name="Buehler E."/>
            <person name="Chan A."/>
            <person name="Chao Q."/>
            <person name="Chen H."/>
            <person name="Cheuk R.F."/>
            <person name="Chin C.W."/>
            <person name="Chung M.K."/>
            <person name="Conn L."/>
            <person name="Conway A.B."/>
            <person name="Conway A.R."/>
            <person name="Creasy T.H."/>
            <person name="Dewar K."/>
            <person name="Dunn P."/>
            <person name="Etgu P."/>
            <person name="Feldblyum T.V."/>
            <person name="Feng J.-D."/>
            <person name="Fong B."/>
            <person name="Fujii C.Y."/>
            <person name="Gill J.E."/>
            <person name="Goldsmith A.D."/>
            <person name="Haas B."/>
            <person name="Hansen N.F."/>
            <person name="Hughes B."/>
            <person name="Huizar L."/>
            <person name="Hunter J.L."/>
            <person name="Jenkins J."/>
            <person name="Johnson-Hopson C."/>
            <person name="Khan S."/>
            <person name="Khaykin E."/>
            <person name="Kim C.J."/>
            <person name="Koo H.L."/>
            <person name="Kremenetskaia I."/>
            <person name="Kurtz D.B."/>
            <person name="Kwan A."/>
            <person name="Lam B."/>
            <person name="Langin-Hooper S."/>
            <person name="Lee A."/>
            <person name="Lee J.M."/>
            <person name="Lenz C.A."/>
            <person name="Li J.H."/>
            <person name="Li Y.-P."/>
            <person name="Lin X."/>
            <person name="Liu S.X."/>
            <person name="Liu Z.A."/>
            <person name="Luros J.S."/>
            <person name="Maiti R."/>
            <person name="Marziali A."/>
            <person name="Militscher J."/>
            <person name="Miranda M."/>
            <person name="Nguyen M."/>
            <person name="Nierman W.C."/>
            <person name="Osborne B.I."/>
            <person name="Pai G."/>
            <person name="Peterson J."/>
            <person name="Pham P.K."/>
            <person name="Rizzo M."/>
            <person name="Rooney T."/>
            <person name="Rowley D."/>
            <person name="Sakano H."/>
            <person name="Salzberg S.L."/>
            <person name="Schwartz J.R."/>
            <person name="Shinn P."/>
            <person name="Southwick A.M."/>
            <person name="Sun H."/>
            <person name="Tallon L.J."/>
            <person name="Tambunga G."/>
            <person name="Toriumi M.J."/>
            <person name="Town C.D."/>
            <person name="Utterback T."/>
            <person name="Van Aken S."/>
            <person name="Vaysberg M."/>
            <person name="Vysotskaia V.S."/>
            <person name="Walker M."/>
            <person name="Wu D."/>
            <person name="Yu G."/>
            <person name="Fraser C.M."/>
            <person name="Venter J.C."/>
            <person name="Davis R.W."/>
        </authorList>
    </citation>
    <scope>NUCLEOTIDE SEQUENCE [LARGE SCALE GENOMIC DNA]</scope>
    <source>
        <strain>cv. Columbia</strain>
    </source>
</reference>
<reference key="2">
    <citation type="journal article" date="2017" name="Plant J.">
        <title>Araport11: a complete reannotation of the Arabidopsis thaliana reference genome.</title>
        <authorList>
            <person name="Cheng C.Y."/>
            <person name="Krishnakumar V."/>
            <person name="Chan A.P."/>
            <person name="Thibaud-Nissen F."/>
            <person name="Schobel S."/>
            <person name="Town C.D."/>
        </authorList>
    </citation>
    <scope>GENOME REANNOTATION</scope>
    <source>
        <strain>cv. Columbia</strain>
    </source>
</reference>
<evidence type="ECO:0000255" key="1">
    <source>
        <dbReference type="PROSITE-ProRule" id="PRU00080"/>
    </source>
</evidence>
<dbReference type="EMBL" id="AC004393">
    <property type="protein sequence ID" value="AAC18789.1"/>
    <property type="molecule type" value="Genomic_DNA"/>
</dbReference>
<dbReference type="EMBL" id="CP002684">
    <property type="protein sequence ID" value="AEE34647.1"/>
    <property type="molecule type" value="Genomic_DNA"/>
</dbReference>
<dbReference type="PIR" id="T02161">
    <property type="entry name" value="T02161"/>
</dbReference>
<dbReference type="RefSeq" id="NP_176912.1">
    <property type="nucleotide sequence ID" value="NM_105412.1"/>
</dbReference>
<dbReference type="SMR" id="O64801"/>
<dbReference type="FunCoup" id="O64801">
    <property type="interactions" value="3"/>
</dbReference>
<dbReference type="STRING" id="3702.O64801"/>
<dbReference type="PaxDb" id="3702-AT1G67450.1"/>
<dbReference type="EnsemblPlants" id="AT1G67450.1">
    <property type="protein sequence ID" value="AT1G67450.1"/>
    <property type="gene ID" value="AT1G67450"/>
</dbReference>
<dbReference type="GeneID" id="843065"/>
<dbReference type="Gramene" id="AT1G67450.1">
    <property type="protein sequence ID" value="AT1G67450.1"/>
    <property type="gene ID" value="AT1G67450"/>
</dbReference>
<dbReference type="KEGG" id="ath:AT1G67450"/>
<dbReference type="Araport" id="AT1G67450"/>
<dbReference type="TAIR" id="AT1G67450"/>
<dbReference type="HOGENOM" id="CLU_034692_0_0_1"/>
<dbReference type="InParanoid" id="O64801"/>
<dbReference type="OMA" id="RTWRVIN"/>
<dbReference type="PhylomeDB" id="O64801"/>
<dbReference type="PRO" id="PR:O64801"/>
<dbReference type="Proteomes" id="UP000006548">
    <property type="component" value="Chromosome 1"/>
</dbReference>
<dbReference type="ExpressionAtlas" id="O64801">
    <property type="expression patterns" value="baseline and differential"/>
</dbReference>
<dbReference type="CDD" id="cd22157">
    <property type="entry name" value="F-box_AtFBW1-like"/>
    <property type="match status" value="1"/>
</dbReference>
<dbReference type="Gene3D" id="1.20.1280.50">
    <property type="match status" value="1"/>
</dbReference>
<dbReference type="InterPro" id="IPR006527">
    <property type="entry name" value="F-box-assoc_dom_typ1"/>
</dbReference>
<dbReference type="InterPro" id="IPR017451">
    <property type="entry name" value="F-box-assoc_interact_dom"/>
</dbReference>
<dbReference type="InterPro" id="IPR036047">
    <property type="entry name" value="F-box-like_dom_sf"/>
</dbReference>
<dbReference type="InterPro" id="IPR001810">
    <property type="entry name" value="F-box_dom"/>
</dbReference>
<dbReference type="InterPro" id="IPR011043">
    <property type="entry name" value="Gal_Oxase/kelch_b-propeller"/>
</dbReference>
<dbReference type="InterPro" id="IPR050796">
    <property type="entry name" value="SCF_F-box_component"/>
</dbReference>
<dbReference type="NCBIfam" id="TIGR01640">
    <property type="entry name" value="F_box_assoc_1"/>
    <property type="match status" value="1"/>
</dbReference>
<dbReference type="PANTHER" id="PTHR31672">
    <property type="entry name" value="BNACNNG10540D PROTEIN"/>
    <property type="match status" value="1"/>
</dbReference>
<dbReference type="PANTHER" id="PTHR31672:SF13">
    <property type="entry name" value="F-BOX PROTEIN CPR30-LIKE"/>
    <property type="match status" value="1"/>
</dbReference>
<dbReference type="Pfam" id="PF00646">
    <property type="entry name" value="F-box"/>
    <property type="match status" value="1"/>
</dbReference>
<dbReference type="Pfam" id="PF07734">
    <property type="entry name" value="FBA_1"/>
    <property type="match status" value="1"/>
</dbReference>
<dbReference type="SMART" id="SM00256">
    <property type="entry name" value="FBOX"/>
    <property type="match status" value="1"/>
</dbReference>
<dbReference type="SUPFAM" id="SSF81383">
    <property type="entry name" value="F-box domain"/>
    <property type="match status" value="1"/>
</dbReference>
<dbReference type="SUPFAM" id="SSF50965">
    <property type="entry name" value="Galactose oxidase, central domain"/>
    <property type="match status" value="1"/>
</dbReference>
<dbReference type="PROSITE" id="PS50181">
    <property type="entry name" value="FBOX"/>
    <property type="match status" value="1"/>
</dbReference>
<protein>
    <recommendedName>
        <fullName>Putative F-box protein At1g67450</fullName>
    </recommendedName>
</protein>
<feature type="chain" id="PRO_0000283351" description="Putative F-box protein At1g67450">
    <location>
        <begin position="1"/>
        <end position="398"/>
    </location>
</feature>
<feature type="domain" description="F-box" evidence="1">
    <location>
        <begin position="2"/>
        <end position="56"/>
    </location>
</feature>
<keyword id="KW-1185">Reference proteome</keyword>
<accession>O64801</accession>
<gene>
    <name type="ordered locus">At1g67450</name>
    <name type="ORF">T1F15.9</name>
</gene>
<organism>
    <name type="scientific">Arabidopsis thaliana</name>
    <name type="common">Mouse-ear cress</name>
    <dbReference type="NCBI Taxonomy" id="3702"/>
    <lineage>
        <taxon>Eukaryota</taxon>
        <taxon>Viridiplantae</taxon>
        <taxon>Streptophyta</taxon>
        <taxon>Embryophyta</taxon>
        <taxon>Tracheophyta</taxon>
        <taxon>Spermatophyta</taxon>
        <taxon>Magnoliopsida</taxon>
        <taxon>eudicotyledons</taxon>
        <taxon>Gunneridae</taxon>
        <taxon>Pentapetalae</taxon>
        <taxon>rosids</taxon>
        <taxon>malvids</taxon>
        <taxon>Brassicales</taxon>
        <taxon>Brassicaceae</taxon>
        <taxon>Camelineae</taxon>
        <taxon>Arabidopsis</taxon>
    </lineage>
</organism>
<proteinExistence type="predicted"/>
<sequence length="398" mass="46236">MTMMMSDLPNDLVEEILSRVPITSLGAVRSTCKRWNGLSKDRIVCKGDANQQFTGFTRYVNESTVCSMRLDLNEIQNEDVELVELSINKINKFIELELFQVYYSDGLLLLVTDEVDSKIVVWNPYLGQTRLIQCRDTEHFKYRYALGYDNNRNHKILMYNRKNCEIYDFKSDSWKVLDIIPDLHTNIYVRDMSIKGNTYFFYRGEKIGEGLAGCLLSFDFTRERFVSCLPLPFQIAKFDDNVALSSVREEHLVVLFNNWEESEMEIWVTTKIEPNAVSWSNFLTFTHFRIKFLVTSFFIDQEKKLAVVFGRSLSKQMRCNIAYVIGDNGYLRILDFGVTFIPSNLPVSYAPSLVKITQGQELSVIEEKKRSRLLASLVYSTLFVSFIIFFSFISSVFI</sequence>
<name>FB78_ARATH</name>